<accession>C1C8X8</accession>
<sequence>MTITGIIAEFNPFHNGHKYLLDQAEGLKIVAMSGNFMQRGEPAIVDKWTRAQMALENGADLVVELPFLVSVQAADFFGQGAVDILDRLGIDSLVFGTEEVRDYQKIADLYTEKGAEMEKFVENLPDSLSYPQKTQSMWKEFAGLDFSGNTPNHVLALAYAKAVAGRNIKLHPIQRQGAGYHSVNKDVDFASATALRQHQKDQDFLERFMPSVALFEQASKVIWEDYFPLLRYQILSNPDLTTIYQVNQEMAVRIKEAIKTAQSVEELVELVTTKRYTKARVRRLLTYILVQARENVLPEAIHVLGFTEKGRQHLKSLKGQVNLVSRIGKEPWDAMTQKADQIYQLGKPSIAEQNFGRVPIRIETN</sequence>
<evidence type="ECO:0000255" key="1">
    <source>
        <dbReference type="HAMAP-Rule" id="MF_01539"/>
    </source>
</evidence>
<protein>
    <recommendedName>
        <fullName evidence="1">tRNA(Met) cytidine acetate ligase</fullName>
        <ecNumber evidence="1">6.3.4.-</ecNumber>
    </recommendedName>
</protein>
<proteinExistence type="inferred from homology"/>
<reference key="1">
    <citation type="journal article" date="2010" name="Genome Biol.">
        <title>Structure and dynamics of the pan-genome of Streptococcus pneumoniae and closely related species.</title>
        <authorList>
            <person name="Donati C."/>
            <person name="Hiller N.L."/>
            <person name="Tettelin H."/>
            <person name="Muzzi A."/>
            <person name="Croucher N.J."/>
            <person name="Angiuoli S.V."/>
            <person name="Oggioni M."/>
            <person name="Dunning Hotopp J.C."/>
            <person name="Hu F.Z."/>
            <person name="Riley D.R."/>
            <person name="Covacci A."/>
            <person name="Mitchell T.J."/>
            <person name="Bentley S.D."/>
            <person name="Kilian M."/>
            <person name="Ehrlich G.D."/>
            <person name="Rappuoli R."/>
            <person name="Moxon E.R."/>
            <person name="Masignani V."/>
        </authorList>
    </citation>
    <scope>NUCLEOTIDE SEQUENCE [LARGE SCALE GENOMIC DNA]</scope>
    <source>
        <strain>70585</strain>
    </source>
</reference>
<keyword id="KW-0067">ATP-binding</keyword>
<keyword id="KW-0963">Cytoplasm</keyword>
<keyword id="KW-0436">Ligase</keyword>
<keyword id="KW-0547">Nucleotide-binding</keyword>
<keyword id="KW-0694">RNA-binding</keyword>
<keyword id="KW-0819">tRNA processing</keyword>
<keyword id="KW-0820">tRNA-binding</keyword>
<feature type="chain" id="PRO_1000185222" description="tRNA(Met) cytidine acetate ligase">
    <location>
        <begin position="1"/>
        <end position="365"/>
    </location>
</feature>
<feature type="binding site" evidence="1">
    <location>
        <begin position="7"/>
        <end position="20"/>
    </location>
    <ligand>
        <name>ATP</name>
        <dbReference type="ChEBI" id="CHEBI:30616"/>
    </ligand>
</feature>
<feature type="binding site" evidence="1">
    <location>
        <position position="96"/>
    </location>
    <ligand>
        <name>ATP</name>
        <dbReference type="ChEBI" id="CHEBI:30616"/>
    </ligand>
</feature>
<feature type="binding site" evidence="1">
    <location>
        <position position="152"/>
    </location>
    <ligand>
        <name>ATP</name>
        <dbReference type="ChEBI" id="CHEBI:30616"/>
    </ligand>
</feature>
<feature type="binding site" evidence="1">
    <location>
        <position position="175"/>
    </location>
    <ligand>
        <name>ATP</name>
        <dbReference type="ChEBI" id="CHEBI:30616"/>
    </ligand>
</feature>
<comment type="function">
    <text evidence="1">Catalyzes the formation of N(4)-acetylcytidine (ac(4)C) at the wobble position of elongator tRNA(Met), using acetate and ATP as substrates. First activates an acetate ion to form acetyladenylate (Ac-AMP) and then transfers the acetyl group to tRNA to form ac(4)C34.</text>
</comment>
<comment type="catalytic activity">
    <reaction evidence="1">
        <text>cytidine(34) in elongator tRNA(Met) + acetate + ATP = N(4)-acetylcytidine(34) in elongator tRNA(Met) + AMP + diphosphate</text>
        <dbReference type="Rhea" id="RHEA:58144"/>
        <dbReference type="Rhea" id="RHEA-COMP:10693"/>
        <dbReference type="Rhea" id="RHEA-COMP:10694"/>
        <dbReference type="ChEBI" id="CHEBI:30089"/>
        <dbReference type="ChEBI" id="CHEBI:30616"/>
        <dbReference type="ChEBI" id="CHEBI:33019"/>
        <dbReference type="ChEBI" id="CHEBI:74900"/>
        <dbReference type="ChEBI" id="CHEBI:82748"/>
        <dbReference type="ChEBI" id="CHEBI:456215"/>
    </reaction>
</comment>
<comment type="subcellular location">
    <subcellularLocation>
        <location evidence="1">Cytoplasm</location>
    </subcellularLocation>
</comment>
<comment type="similarity">
    <text evidence="1">Belongs to the TmcAL family.</text>
</comment>
<organism>
    <name type="scientific">Streptococcus pneumoniae (strain 70585)</name>
    <dbReference type="NCBI Taxonomy" id="488221"/>
    <lineage>
        <taxon>Bacteria</taxon>
        <taxon>Bacillati</taxon>
        <taxon>Bacillota</taxon>
        <taxon>Bacilli</taxon>
        <taxon>Lactobacillales</taxon>
        <taxon>Streptococcaceae</taxon>
        <taxon>Streptococcus</taxon>
    </lineage>
</organism>
<dbReference type="EC" id="6.3.4.-" evidence="1"/>
<dbReference type="EMBL" id="CP000918">
    <property type="protein sequence ID" value="ACO17821.1"/>
    <property type="molecule type" value="Genomic_DNA"/>
</dbReference>
<dbReference type="RefSeq" id="WP_000156342.1">
    <property type="nucleotide sequence ID" value="NC_012468.1"/>
</dbReference>
<dbReference type="SMR" id="C1C8X8"/>
<dbReference type="KEGG" id="snm:SP70585_1781"/>
<dbReference type="HOGENOM" id="CLU_038915_0_2_9"/>
<dbReference type="Proteomes" id="UP000002211">
    <property type="component" value="Chromosome"/>
</dbReference>
<dbReference type="GO" id="GO:0005737">
    <property type="term" value="C:cytoplasm"/>
    <property type="evidence" value="ECO:0007669"/>
    <property type="project" value="UniProtKB-SubCell"/>
</dbReference>
<dbReference type="GO" id="GO:0005524">
    <property type="term" value="F:ATP binding"/>
    <property type="evidence" value="ECO:0007669"/>
    <property type="project" value="UniProtKB-KW"/>
</dbReference>
<dbReference type="GO" id="GO:0016879">
    <property type="term" value="F:ligase activity, forming carbon-nitrogen bonds"/>
    <property type="evidence" value="ECO:0007669"/>
    <property type="project" value="UniProtKB-UniRule"/>
</dbReference>
<dbReference type="GO" id="GO:0000049">
    <property type="term" value="F:tRNA binding"/>
    <property type="evidence" value="ECO:0007669"/>
    <property type="project" value="UniProtKB-KW"/>
</dbReference>
<dbReference type="GO" id="GO:0006400">
    <property type="term" value="P:tRNA modification"/>
    <property type="evidence" value="ECO:0007669"/>
    <property type="project" value="UniProtKB-UniRule"/>
</dbReference>
<dbReference type="Gene3D" id="3.40.50.620">
    <property type="entry name" value="HUPs"/>
    <property type="match status" value="1"/>
</dbReference>
<dbReference type="HAMAP" id="MF_01539">
    <property type="entry name" value="TmcAL"/>
    <property type="match status" value="1"/>
</dbReference>
<dbReference type="InterPro" id="IPR014729">
    <property type="entry name" value="Rossmann-like_a/b/a_fold"/>
</dbReference>
<dbReference type="InterPro" id="IPR008513">
    <property type="entry name" value="tRNA(Met)_cyd_acetate_ligase"/>
</dbReference>
<dbReference type="NCBIfam" id="NF010191">
    <property type="entry name" value="PRK13670.1"/>
    <property type="match status" value="1"/>
</dbReference>
<dbReference type="PANTHER" id="PTHR37825">
    <property type="entry name" value="TRNA(MET) CYTIDINE ACETATE LIGASE"/>
    <property type="match status" value="1"/>
</dbReference>
<dbReference type="PANTHER" id="PTHR37825:SF1">
    <property type="entry name" value="TRNA(MET) CYTIDINE ACETATE LIGASE"/>
    <property type="match status" value="1"/>
</dbReference>
<dbReference type="Pfam" id="PF05636">
    <property type="entry name" value="HIGH_NTase1"/>
    <property type="match status" value="1"/>
</dbReference>
<dbReference type="SUPFAM" id="SSF52374">
    <property type="entry name" value="Nucleotidylyl transferase"/>
    <property type="match status" value="1"/>
</dbReference>
<name>TMCAL_STRP7</name>
<gene>
    <name evidence="1" type="primary">tmcAL</name>
    <name type="ordered locus">SP70585_1781</name>
</gene>